<protein>
    <recommendedName>
        <fullName evidence="3">Olfactory receptor 10D3</fullName>
    </recommendedName>
    <alternativeName>
        <fullName evidence="4">HTPCRX09</fullName>
    </alternativeName>
    <alternativeName>
        <fullName>Olfactory receptor OR11-293</fullName>
    </alternativeName>
</protein>
<organism>
    <name type="scientific">Homo sapiens</name>
    <name type="common">Human</name>
    <dbReference type="NCBI Taxonomy" id="9606"/>
    <lineage>
        <taxon>Eukaryota</taxon>
        <taxon>Metazoa</taxon>
        <taxon>Chordata</taxon>
        <taxon>Craniata</taxon>
        <taxon>Vertebrata</taxon>
        <taxon>Euteleostomi</taxon>
        <taxon>Mammalia</taxon>
        <taxon>Eutheria</taxon>
        <taxon>Euarchontoglires</taxon>
        <taxon>Primates</taxon>
        <taxon>Haplorrhini</taxon>
        <taxon>Catarrhini</taxon>
        <taxon>Hominidae</taxon>
        <taxon>Homo</taxon>
    </lineage>
</organism>
<accession>Q8NH80</accession>
<evidence type="ECO:0000255" key="1"/>
<evidence type="ECO:0000255" key="2">
    <source>
        <dbReference type="PROSITE-ProRule" id="PRU00521"/>
    </source>
</evidence>
<evidence type="ECO:0000305" key="3"/>
<evidence type="ECO:0000312" key="4">
    <source>
        <dbReference type="HGNC" id="HGNC:8168"/>
    </source>
</evidence>
<gene>
    <name evidence="4" type="primary">OR10D3</name>
    <name evidence="4" type="synonym">OR10D3P</name>
</gene>
<comment type="function">
    <text evidence="3">Odorant receptor.</text>
</comment>
<comment type="subcellular location">
    <subcellularLocation>
        <location evidence="3">Cell membrane</location>
        <topology evidence="1">Multi-pass membrane protein</topology>
    </subcellularLocation>
</comment>
<comment type="similarity">
    <text evidence="2">Belongs to the G-protein coupled receptor 1 family.</text>
</comment>
<comment type="online information" name="Human Olfactory Receptor Data Exploratorium (HORDE)">
    <link uri="http://genome.weizmann.ac.il/horde/card/index/symbol:OR10D3P"/>
</comment>
<proteinExistence type="evidence at transcript level"/>
<sequence>MEVKNCCMVTEFILLGIPHTEGLEMTLFVLFLPFYACTLLGNVSILVAVMSSARLHTPMYFFLGNLSVFDMGFSSVTCPKMLLYLMGLSRLISYKDCVCQLFFFHFLGSIECFLFTVMAYDRFTAICYPLRYTVIMNPRICVALAVGTWLLGCIHSSILTSLTFTLPYCGPNEVDHFFCDIPALLPLACADTSLAQRVSFTNVGLISLVCFLLILLSYTRITISILSIRTTEGRRRAFSTCSAHLIAILCAYGPIITVYLQPTPNPMLGTVVQILMNLVGPMLNPLIYTLRNKEVKTALKTILHRTGHVPES</sequence>
<reference key="1">
    <citation type="submission" date="2001-07" db="EMBL/GenBank/DDBJ databases">
        <title>Genome-wide discovery and analysis of human seven transmembrane helix receptor genes.</title>
        <authorList>
            <person name="Suwa M."/>
            <person name="Sato T."/>
            <person name="Okouchi I."/>
            <person name="Arita M."/>
            <person name="Futami K."/>
            <person name="Matsumoto S."/>
            <person name="Tsutsumi S."/>
            <person name="Aburatani H."/>
            <person name="Asai K."/>
            <person name="Akiyama Y."/>
        </authorList>
    </citation>
    <scope>NUCLEOTIDE SEQUENCE [GENOMIC DNA]</scope>
</reference>
<reference key="2">
    <citation type="journal article" date="1992" name="Nature">
        <title>Expression of members of the putative olfactory receptor gene family in mammalian germ cells.</title>
        <authorList>
            <person name="Parmentier M."/>
            <person name="Libert F."/>
            <person name="Schurmans S."/>
            <person name="Schiffmann S."/>
            <person name="Lefort A."/>
            <person name="Eggerickx D."/>
            <person name="Ledent C."/>
            <person name="Mollereau C."/>
            <person name="Gerard C."/>
            <person name="Perret J."/>
            <person name="Grootegoed A."/>
            <person name="Vassart G."/>
        </authorList>
    </citation>
    <scope>NUCLEOTIDE SEQUENCE [MRNA] OF 126-239</scope>
</reference>
<reference key="3">
    <citation type="journal article" date="2004" name="Proc. Natl. Acad. Sci. U.S.A.">
        <title>The human olfactory receptor gene family.</title>
        <authorList>
            <person name="Malnic B."/>
            <person name="Godfrey P.A."/>
            <person name="Buck L.B."/>
        </authorList>
    </citation>
    <scope>IDENTIFICATION</scope>
</reference>
<reference key="4">
    <citation type="journal article" date="2004" name="Proc. Natl. Acad. Sci. U.S.A.">
        <authorList>
            <person name="Malnic B."/>
            <person name="Godfrey P.A."/>
            <person name="Buck L.B."/>
        </authorList>
    </citation>
    <scope>ERRATUM OF PUBMED:14983052</scope>
</reference>
<dbReference type="EMBL" id="AB065509">
    <property type="protein sequence ID" value="BAC05757.1"/>
    <property type="molecule type" value="Genomic_DNA"/>
</dbReference>
<dbReference type="EMBL" id="X64983">
    <property type="status" value="NOT_ANNOTATED_CDS"/>
    <property type="molecule type" value="mRNA"/>
</dbReference>
<dbReference type="EMBL" id="BK004425">
    <property type="protein sequence ID" value="DAA04823.1"/>
    <property type="molecule type" value="Genomic_DNA"/>
</dbReference>
<dbReference type="CCDS" id="CCDS86257.1"/>
<dbReference type="RefSeq" id="NP_001342142.1">
    <property type="nucleotide sequence ID" value="NM_001355213.3"/>
</dbReference>
<dbReference type="SMR" id="Q8NH80"/>
<dbReference type="FunCoup" id="Q8NH80">
    <property type="interactions" value="69"/>
</dbReference>
<dbReference type="STRING" id="9606.ENSP00000493231"/>
<dbReference type="BioMuta" id="OR10D3"/>
<dbReference type="DMDM" id="74760322"/>
<dbReference type="PaxDb" id="9606-ENSP00000323895"/>
<dbReference type="Antibodypedia" id="65551">
    <property type="antibodies" value="7 antibodies from 7 providers"/>
</dbReference>
<dbReference type="Ensembl" id="ENST00000318666.6">
    <property type="protein sequence ID" value="ENSP00000323895.6"/>
    <property type="gene ID" value="ENSG00000197309.5"/>
</dbReference>
<dbReference type="Ensembl" id="ENST00000641351.3">
    <property type="protein sequence ID" value="ENSP00000493028.1"/>
    <property type="gene ID" value="ENSG00000197309.5"/>
</dbReference>
<dbReference type="Ensembl" id="ENST00000641546.1">
    <property type="protein sequence ID" value="ENSP00000493231.1"/>
    <property type="gene ID" value="ENSG00000197309.5"/>
</dbReference>
<dbReference type="GeneID" id="26497"/>
<dbReference type="MANE-Select" id="ENST00000641351.3">
    <property type="protein sequence ID" value="ENSP00000493028.1"/>
    <property type="RefSeq nucleotide sequence ID" value="NM_001355213.3"/>
    <property type="RefSeq protein sequence ID" value="NP_001342142.1"/>
</dbReference>
<dbReference type="UCSC" id="uc001pzv.3">
    <property type="organism name" value="human"/>
</dbReference>
<dbReference type="AGR" id="HGNC:8168"/>
<dbReference type="GeneCards" id="OR10D3"/>
<dbReference type="HGNC" id="HGNC:8168">
    <property type="gene designation" value="OR10D3"/>
</dbReference>
<dbReference type="HPA" id="ENSG00000197309">
    <property type="expression patterns" value="Not detected"/>
</dbReference>
<dbReference type="neXtProt" id="NX_Q8NH80"/>
<dbReference type="VEuPathDB" id="HostDB:ENSG00000197309"/>
<dbReference type="eggNOG" id="ENOG502SH9P">
    <property type="taxonomic scope" value="Eukaryota"/>
</dbReference>
<dbReference type="GeneTree" id="ENSGT01050000244869"/>
<dbReference type="HOGENOM" id="CLU_012526_8_1_1"/>
<dbReference type="InParanoid" id="Q8NH80"/>
<dbReference type="OMA" id="FALPYCG"/>
<dbReference type="OrthoDB" id="5975390at2759"/>
<dbReference type="PAN-GO" id="Q8NH80">
    <property type="GO annotations" value="1 GO annotation based on evolutionary models"/>
</dbReference>
<dbReference type="PhylomeDB" id="Q8NH80"/>
<dbReference type="TreeFam" id="TF336512"/>
<dbReference type="PathwayCommons" id="Q8NH80"/>
<dbReference type="Reactome" id="R-HSA-9752946">
    <property type="pathway name" value="Expression and translocation of olfactory receptors"/>
</dbReference>
<dbReference type="SignaLink" id="Q8NH80"/>
<dbReference type="ChiTaRS" id="OR10D3">
    <property type="organism name" value="human"/>
</dbReference>
<dbReference type="Pharos" id="Q8NH80">
    <property type="development level" value="Tdark"/>
</dbReference>
<dbReference type="PRO" id="PR:Q8NH80"/>
<dbReference type="Proteomes" id="UP000005640">
    <property type="component" value="Chromosome 11"/>
</dbReference>
<dbReference type="RNAct" id="Q8NH80">
    <property type="molecule type" value="protein"/>
</dbReference>
<dbReference type="Bgee" id="ENSG00000197309">
    <property type="expression patterns" value="Expressed in male germ line stem cell (sensu Vertebrata) in testis and 4 other cell types or tissues"/>
</dbReference>
<dbReference type="GO" id="GO:0005886">
    <property type="term" value="C:plasma membrane"/>
    <property type="evidence" value="ECO:0000318"/>
    <property type="project" value="GO_Central"/>
</dbReference>
<dbReference type="GO" id="GO:0004930">
    <property type="term" value="F:G protein-coupled receptor activity"/>
    <property type="evidence" value="ECO:0007669"/>
    <property type="project" value="UniProtKB-KW"/>
</dbReference>
<dbReference type="GO" id="GO:0004984">
    <property type="term" value="F:olfactory receptor activity"/>
    <property type="evidence" value="ECO:0000318"/>
    <property type="project" value="GO_Central"/>
</dbReference>
<dbReference type="GO" id="GO:0050911">
    <property type="term" value="P:detection of chemical stimulus involved in sensory perception of smell"/>
    <property type="evidence" value="ECO:0000318"/>
    <property type="project" value="GO_Central"/>
</dbReference>
<dbReference type="CDD" id="cd15228">
    <property type="entry name" value="7tmA_OR10D-like"/>
    <property type="match status" value="1"/>
</dbReference>
<dbReference type="FunFam" id="1.20.1070.10:FF:000001">
    <property type="entry name" value="Olfactory receptor"/>
    <property type="match status" value="1"/>
</dbReference>
<dbReference type="Gene3D" id="1.20.1070.10">
    <property type="entry name" value="Rhodopsin 7-helix transmembrane proteins"/>
    <property type="match status" value="1"/>
</dbReference>
<dbReference type="InterPro" id="IPR000276">
    <property type="entry name" value="GPCR_Rhodpsn"/>
</dbReference>
<dbReference type="InterPro" id="IPR017452">
    <property type="entry name" value="GPCR_Rhodpsn_7TM"/>
</dbReference>
<dbReference type="InterPro" id="IPR000725">
    <property type="entry name" value="Olfact_rcpt"/>
</dbReference>
<dbReference type="PANTHER" id="PTHR26453">
    <property type="entry name" value="OLFACTORY RECEPTOR"/>
    <property type="match status" value="1"/>
</dbReference>
<dbReference type="Pfam" id="PF13853">
    <property type="entry name" value="7tm_4"/>
    <property type="match status" value="1"/>
</dbReference>
<dbReference type="PRINTS" id="PR00237">
    <property type="entry name" value="GPCRRHODOPSN"/>
</dbReference>
<dbReference type="PRINTS" id="PR00245">
    <property type="entry name" value="OLFACTORYR"/>
</dbReference>
<dbReference type="SUPFAM" id="SSF81321">
    <property type="entry name" value="Family A G protein-coupled receptor-like"/>
    <property type="match status" value="1"/>
</dbReference>
<dbReference type="PROSITE" id="PS50262">
    <property type="entry name" value="G_PROTEIN_RECEP_F1_2"/>
    <property type="match status" value="1"/>
</dbReference>
<name>O10D3_HUMAN</name>
<feature type="chain" id="PRO_0000349228" description="Olfactory receptor 10D3">
    <location>
        <begin position="1"/>
        <end position="312"/>
    </location>
</feature>
<feature type="topological domain" description="Extracellular" evidence="1">
    <location>
        <begin position="1"/>
        <end position="26"/>
    </location>
</feature>
<feature type="transmembrane region" description="Helical; Name=1" evidence="1">
    <location>
        <begin position="27"/>
        <end position="47"/>
    </location>
</feature>
<feature type="topological domain" description="Cytoplasmic" evidence="1">
    <location>
        <begin position="48"/>
        <end position="57"/>
    </location>
</feature>
<feature type="transmembrane region" description="Helical; Name=2" evidence="1">
    <location>
        <begin position="58"/>
        <end position="78"/>
    </location>
</feature>
<feature type="topological domain" description="Extracellular" evidence="1">
    <location>
        <begin position="79"/>
        <end position="97"/>
    </location>
</feature>
<feature type="transmembrane region" description="Helical; Name=3" evidence="1">
    <location>
        <begin position="98"/>
        <end position="118"/>
    </location>
</feature>
<feature type="topological domain" description="Cytoplasmic" evidence="1">
    <location>
        <begin position="119"/>
        <end position="139"/>
    </location>
</feature>
<feature type="transmembrane region" description="Helical; Name=4" evidence="1">
    <location>
        <begin position="140"/>
        <end position="160"/>
    </location>
</feature>
<feature type="topological domain" description="Extracellular" evidence="1">
    <location>
        <begin position="161"/>
        <end position="197"/>
    </location>
</feature>
<feature type="transmembrane region" description="Helical; Name=5" evidence="1">
    <location>
        <begin position="198"/>
        <end position="218"/>
    </location>
</feature>
<feature type="topological domain" description="Cytoplasmic" evidence="1">
    <location>
        <begin position="219"/>
        <end position="239"/>
    </location>
</feature>
<feature type="transmembrane region" description="Helical; Name=6" evidence="1">
    <location>
        <begin position="240"/>
        <end position="260"/>
    </location>
</feature>
<feature type="topological domain" description="Extracellular" evidence="1">
    <location>
        <begin position="261"/>
        <end position="266"/>
    </location>
</feature>
<feature type="transmembrane region" description="Helical; Name=7" evidence="1">
    <location>
        <begin position="267"/>
        <end position="287"/>
    </location>
</feature>
<feature type="topological domain" description="Cytoplasmic" evidence="1">
    <location>
        <begin position="288"/>
        <end position="312"/>
    </location>
</feature>
<feature type="disulfide bond" evidence="2">
    <location>
        <begin position="97"/>
        <end position="179"/>
    </location>
</feature>
<feature type="sequence conflict" description="In Ref. 2; X64983." evidence="3" ref="2">
    <original>V</original>
    <variation>A</variation>
    <location>
        <position position="134"/>
    </location>
</feature>
<feature type="sequence conflict" description="In Ref. 2; X64983." evidence="3" ref="2">
    <original>N</original>
    <variation>S</variation>
    <location>
        <position position="202"/>
    </location>
</feature>
<keyword id="KW-1003">Cell membrane</keyword>
<keyword id="KW-1015">Disulfide bond</keyword>
<keyword id="KW-0297">G-protein coupled receptor</keyword>
<keyword id="KW-0472">Membrane</keyword>
<keyword id="KW-0552">Olfaction</keyword>
<keyword id="KW-0675">Receptor</keyword>
<keyword id="KW-1185">Reference proteome</keyword>
<keyword id="KW-0716">Sensory transduction</keyword>
<keyword id="KW-0807">Transducer</keyword>
<keyword id="KW-0812">Transmembrane</keyword>
<keyword id="KW-1133">Transmembrane helix</keyword>